<keyword id="KW-1003">Cell membrane</keyword>
<keyword id="KW-0407">Ion channel</keyword>
<keyword id="KW-0406">Ion transport</keyword>
<keyword id="KW-0472">Membrane</keyword>
<keyword id="KW-0812">Transmembrane</keyword>
<keyword id="KW-1133">Transmembrane helix</keyword>
<keyword id="KW-0813">Transport</keyword>
<organism>
    <name type="scientific">Bacillus mycoides (strain KBAB4)</name>
    <name type="common">Bacillus weihenstephanensis</name>
    <dbReference type="NCBI Taxonomy" id="315730"/>
    <lineage>
        <taxon>Bacteria</taxon>
        <taxon>Bacillati</taxon>
        <taxon>Bacillota</taxon>
        <taxon>Bacilli</taxon>
        <taxon>Bacillales</taxon>
        <taxon>Bacillaceae</taxon>
        <taxon>Bacillus</taxon>
        <taxon>Bacillus cereus group</taxon>
    </lineage>
</organism>
<dbReference type="EMBL" id="CP000903">
    <property type="protein sequence ID" value="ABY45658.1"/>
    <property type="molecule type" value="Genomic_DNA"/>
</dbReference>
<dbReference type="RefSeq" id="WP_002015591.1">
    <property type="nucleotide sequence ID" value="NC_010184.1"/>
</dbReference>
<dbReference type="SMR" id="A9VKI1"/>
<dbReference type="GeneID" id="66265769"/>
<dbReference type="KEGG" id="bwe:BcerKBAB4_4501"/>
<dbReference type="eggNOG" id="COG1970">
    <property type="taxonomic scope" value="Bacteria"/>
</dbReference>
<dbReference type="HOGENOM" id="CLU_095787_0_0_9"/>
<dbReference type="Proteomes" id="UP000002154">
    <property type="component" value="Chromosome"/>
</dbReference>
<dbReference type="GO" id="GO:0005886">
    <property type="term" value="C:plasma membrane"/>
    <property type="evidence" value="ECO:0007669"/>
    <property type="project" value="UniProtKB-SubCell"/>
</dbReference>
<dbReference type="GO" id="GO:0008381">
    <property type="term" value="F:mechanosensitive monoatomic ion channel activity"/>
    <property type="evidence" value="ECO:0007669"/>
    <property type="project" value="UniProtKB-UniRule"/>
</dbReference>
<dbReference type="FunFam" id="1.10.1200.120:FF:000001">
    <property type="entry name" value="Large-conductance mechanosensitive channel"/>
    <property type="match status" value="1"/>
</dbReference>
<dbReference type="Gene3D" id="1.10.1200.120">
    <property type="entry name" value="Large-conductance mechanosensitive channel, MscL, domain 1"/>
    <property type="match status" value="1"/>
</dbReference>
<dbReference type="HAMAP" id="MF_00115">
    <property type="entry name" value="MscL"/>
    <property type="match status" value="1"/>
</dbReference>
<dbReference type="InterPro" id="IPR019823">
    <property type="entry name" value="Mechanosensitive_channel_CS"/>
</dbReference>
<dbReference type="InterPro" id="IPR001185">
    <property type="entry name" value="MS_channel"/>
</dbReference>
<dbReference type="InterPro" id="IPR037673">
    <property type="entry name" value="MSC/AndL"/>
</dbReference>
<dbReference type="InterPro" id="IPR036019">
    <property type="entry name" value="MscL_channel"/>
</dbReference>
<dbReference type="NCBIfam" id="TIGR00220">
    <property type="entry name" value="mscL"/>
    <property type="match status" value="1"/>
</dbReference>
<dbReference type="NCBIfam" id="NF001843">
    <property type="entry name" value="PRK00567.1-4"/>
    <property type="match status" value="1"/>
</dbReference>
<dbReference type="NCBIfam" id="NF010560">
    <property type="entry name" value="PRK13955.1"/>
    <property type="match status" value="1"/>
</dbReference>
<dbReference type="PANTHER" id="PTHR30266:SF2">
    <property type="entry name" value="LARGE-CONDUCTANCE MECHANOSENSITIVE CHANNEL"/>
    <property type="match status" value="1"/>
</dbReference>
<dbReference type="PANTHER" id="PTHR30266">
    <property type="entry name" value="MECHANOSENSITIVE CHANNEL MSCL"/>
    <property type="match status" value="1"/>
</dbReference>
<dbReference type="Pfam" id="PF01741">
    <property type="entry name" value="MscL"/>
    <property type="match status" value="1"/>
</dbReference>
<dbReference type="PRINTS" id="PR01264">
    <property type="entry name" value="MECHCHANNEL"/>
</dbReference>
<dbReference type="SUPFAM" id="SSF81330">
    <property type="entry name" value="Gated mechanosensitive channel"/>
    <property type="match status" value="1"/>
</dbReference>
<dbReference type="PROSITE" id="PS01327">
    <property type="entry name" value="MSCL"/>
    <property type="match status" value="1"/>
</dbReference>
<name>MSCL_BACMK</name>
<feature type="chain" id="PRO_1000094877" description="Large-conductance mechanosensitive channel">
    <location>
        <begin position="1"/>
        <end position="133"/>
    </location>
</feature>
<feature type="transmembrane region" description="Helical" evidence="1">
    <location>
        <begin position="14"/>
        <end position="34"/>
    </location>
</feature>
<feature type="transmembrane region" description="Helical" evidence="1">
    <location>
        <begin position="67"/>
        <end position="87"/>
    </location>
</feature>
<protein>
    <recommendedName>
        <fullName evidence="1">Large-conductance mechanosensitive channel</fullName>
    </recommendedName>
</protein>
<comment type="function">
    <text evidence="1">Channel that opens in response to stretch forces in the membrane lipid bilayer. May participate in the regulation of osmotic pressure changes within the cell.</text>
</comment>
<comment type="subunit">
    <text evidence="1">Homopentamer.</text>
</comment>
<comment type="subcellular location">
    <subcellularLocation>
        <location evidence="1">Cell membrane</location>
        <topology evidence="1">Multi-pass membrane protein</topology>
    </subcellularLocation>
</comment>
<comment type="similarity">
    <text evidence="1">Belongs to the MscL family.</text>
</comment>
<accession>A9VKI1</accession>
<proteinExistence type="inferred from homology"/>
<sequence length="133" mass="14939">MWNEFKKFAFKGNVIDLAVGVVIGAAFGKIVSSLVKDIITPLLGMVLGGVNFTDLKLTFGKSSIMYGNFIQTIFDFLIIAAAIFMFVKVFNKLTSKREEEEKKEELPEPTKEEEILGEIRDLLKQQNSSKDRA</sequence>
<reference key="1">
    <citation type="journal article" date="2008" name="Chem. Biol. Interact.">
        <title>Extending the Bacillus cereus group genomics to putative food-borne pathogens of different toxicity.</title>
        <authorList>
            <person name="Lapidus A."/>
            <person name="Goltsman E."/>
            <person name="Auger S."/>
            <person name="Galleron N."/>
            <person name="Segurens B."/>
            <person name="Dossat C."/>
            <person name="Land M.L."/>
            <person name="Broussolle V."/>
            <person name="Brillard J."/>
            <person name="Guinebretiere M.-H."/>
            <person name="Sanchis V."/>
            <person name="Nguen-the C."/>
            <person name="Lereclus D."/>
            <person name="Richardson P."/>
            <person name="Wincker P."/>
            <person name="Weissenbach J."/>
            <person name="Ehrlich S.D."/>
            <person name="Sorokin A."/>
        </authorList>
    </citation>
    <scope>NUCLEOTIDE SEQUENCE [LARGE SCALE GENOMIC DNA]</scope>
    <source>
        <strain>KBAB4</strain>
    </source>
</reference>
<gene>
    <name evidence="1" type="primary">mscL</name>
    <name type="ordered locus">BcerKBAB4_4501</name>
</gene>
<evidence type="ECO:0000255" key="1">
    <source>
        <dbReference type="HAMAP-Rule" id="MF_00115"/>
    </source>
</evidence>